<evidence type="ECO:0000250" key="1">
    <source>
        <dbReference type="UniProtKB" id="F1SEC0"/>
    </source>
</evidence>
<evidence type="ECO:0000250" key="2">
    <source>
        <dbReference type="UniProtKB" id="O75935"/>
    </source>
</evidence>
<evidence type="ECO:0000255" key="3"/>
<evidence type="ECO:0000305" key="4"/>
<sequence length="186" mass="21192">MAAVTDVQRLQARVEELERWVYGPGGSRGSRKVADGLVKVQVALGNIASKRERVKVLYKKIEDLIKYLDPEYIDRIALPDASKLQFILAEEQFILSQVALLEQVEALVPMLDSTHIKAVPEHAARLQRLAQIHIQQQDQCVEITEESKALLEEYNKTTMLLSKQFVQWDELLCQLEAAKQVKPVEE</sequence>
<comment type="function">
    <text evidence="1 2">Part of the dynactin complex that activates the molecular motor dynein for ultra-processive transport along microtubules (By similarity). Together with dynein may be involved in spindle assembly and cytokinesis (By similarity).</text>
</comment>
<comment type="subunit">
    <text evidence="1">Subunit of dynactin, a multiprotein complex part of a tripartite complex with dynein and a adapter, such as BICDL1, BICD2 or HOOK3. The dynactin complex is built around ACTR1A/ACTB filament and consists of an actin-related filament composed of a shoulder domain, a pointed end and a barbed end. Its length is defined by its flexible shoulder domain. The soulder is composed of 2 DCTN1 subunits, 4 DCTN2 and 2 DCTN3. The 4 DCNT2 (via N-terminus) bind the ACTR1A filament and act as molecular rulers to determine the length. The pointed end is important for binding dynein-dynactin cargo adapters. Consists of 4 subunits: ACTR10, DCNT4, DCTN5 and DCTN6. The barbed end is composed of a CAPZA1:CAPZB heterodimers, which binds ACTR1A/ACTB filament and dynactin and stabilizes dynactin.</text>
</comment>
<comment type="subcellular location">
    <subcellularLocation>
        <location evidence="2">Cytoplasm</location>
    </subcellularLocation>
    <subcellularLocation>
        <location evidence="2">Cytoplasm</location>
        <location evidence="2">Cytoskeleton</location>
        <location evidence="2">Microtubule organizing center</location>
        <location evidence="2">Centrosome</location>
    </subcellularLocation>
    <subcellularLocation>
        <location evidence="2">Chromosome</location>
        <location evidence="2">Centromere</location>
        <location evidence="2">Kinetochore</location>
    </subcellularLocation>
    <subcellularLocation>
        <location evidence="2">Cytoplasm</location>
        <location evidence="2">Cytoskeleton</location>
        <location evidence="2">Spindle</location>
    </subcellularLocation>
    <subcellularLocation>
        <location evidence="2">Cleavage furrow</location>
    </subcellularLocation>
    <subcellularLocation>
        <location evidence="2">Midbody</location>
    </subcellularLocation>
    <text evidence="2">Localizes to punctate cytoplasmic structures and to the centrosome during interphase, and to kinetochores and to spindle poles throughout mitosis. Colocalizes with dynein to the cleavage furrow and to midbody of dividing cells.</text>
</comment>
<comment type="similarity">
    <text evidence="4">Belongs to the dynactin subunit 3 family.</text>
</comment>
<keyword id="KW-0007">Acetylation</keyword>
<keyword id="KW-0131">Cell cycle</keyword>
<keyword id="KW-0132">Cell division</keyword>
<keyword id="KW-0137">Centromere</keyword>
<keyword id="KW-0158">Chromosome</keyword>
<keyword id="KW-0175">Coiled coil</keyword>
<keyword id="KW-0963">Cytoplasm</keyword>
<keyword id="KW-0206">Cytoskeleton</keyword>
<keyword id="KW-0995">Kinetochore</keyword>
<keyword id="KW-0498">Mitosis</keyword>
<keyword id="KW-1185">Reference proteome</keyword>
<accession>Q0P5A1</accession>
<feature type="initiator methionine" description="Removed" evidence="2">
    <location>
        <position position="1"/>
    </location>
</feature>
<feature type="chain" id="PRO_0000282603" description="Dynactin subunit 3">
    <location>
        <begin position="2"/>
        <end position="186"/>
    </location>
</feature>
<feature type="coiled-coil region" evidence="3">
    <location>
        <begin position="135"/>
        <end position="157"/>
    </location>
</feature>
<feature type="modified residue" description="N-acetylalanine" evidence="2">
    <location>
        <position position="2"/>
    </location>
</feature>
<dbReference type="EMBL" id="BC120309">
    <property type="protein sequence ID" value="AAI20310.1"/>
    <property type="molecule type" value="mRNA"/>
</dbReference>
<dbReference type="RefSeq" id="NP_001069128.1">
    <property type="nucleotide sequence ID" value="NM_001075660.1"/>
</dbReference>
<dbReference type="SMR" id="Q0P5A1"/>
<dbReference type="CORUM" id="Q0P5A1"/>
<dbReference type="FunCoup" id="Q0P5A1">
    <property type="interactions" value="2536"/>
</dbReference>
<dbReference type="STRING" id="9913.ENSBTAP00000025136"/>
<dbReference type="PaxDb" id="9913-ENSBTAP00000025136"/>
<dbReference type="GeneID" id="514327"/>
<dbReference type="KEGG" id="bta:514327"/>
<dbReference type="CTD" id="11258"/>
<dbReference type="VEuPathDB" id="HostDB:ENSBTAG00000018883"/>
<dbReference type="eggNOG" id="ENOG502RYZ0">
    <property type="taxonomic scope" value="Eukaryota"/>
</dbReference>
<dbReference type="HOGENOM" id="CLU_121487_1_0_1"/>
<dbReference type="InParanoid" id="Q0P5A1"/>
<dbReference type="OMA" id="IQQQEQC"/>
<dbReference type="OrthoDB" id="16729at2759"/>
<dbReference type="TreeFam" id="TF105248"/>
<dbReference type="Reactome" id="R-BTA-2132295">
    <property type="pathway name" value="MHC class II antigen presentation"/>
</dbReference>
<dbReference type="Reactome" id="R-BTA-2565942">
    <property type="pathway name" value="Regulation of PLK1 Activity at G2/M Transition"/>
</dbReference>
<dbReference type="Reactome" id="R-BTA-3371497">
    <property type="pathway name" value="HSP90 chaperone cycle for steroid hormone receptors (SHR) in the presence of ligand"/>
</dbReference>
<dbReference type="Reactome" id="R-BTA-380259">
    <property type="pathway name" value="Loss of Nlp from mitotic centrosomes"/>
</dbReference>
<dbReference type="Reactome" id="R-BTA-380270">
    <property type="pathway name" value="Recruitment of mitotic centrosome proteins and complexes"/>
</dbReference>
<dbReference type="Reactome" id="R-BTA-380284">
    <property type="pathway name" value="Loss of proteins required for interphase microtubule organization from the centrosome"/>
</dbReference>
<dbReference type="Reactome" id="R-BTA-380320">
    <property type="pathway name" value="Recruitment of NuMA to mitotic centrosomes"/>
</dbReference>
<dbReference type="Reactome" id="R-BTA-5620912">
    <property type="pathway name" value="Anchoring of the basal body to the plasma membrane"/>
</dbReference>
<dbReference type="Reactome" id="R-BTA-6807878">
    <property type="pathway name" value="COPI-mediated anterograde transport"/>
</dbReference>
<dbReference type="Reactome" id="R-BTA-6811436">
    <property type="pathway name" value="COPI-independent Golgi-to-ER retrograde traffic"/>
</dbReference>
<dbReference type="Reactome" id="R-BTA-8854518">
    <property type="pathway name" value="AURKA Activation by TPX2"/>
</dbReference>
<dbReference type="Proteomes" id="UP000009136">
    <property type="component" value="Chromosome 8"/>
</dbReference>
<dbReference type="Bgee" id="ENSBTAG00000018883">
    <property type="expression patterns" value="Expressed in retina and 104 other cell types or tissues"/>
</dbReference>
<dbReference type="GO" id="GO:0005813">
    <property type="term" value="C:centrosome"/>
    <property type="evidence" value="ECO:0007669"/>
    <property type="project" value="UniProtKB-SubCell"/>
</dbReference>
<dbReference type="GO" id="GO:0032154">
    <property type="term" value="C:cleavage furrow"/>
    <property type="evidence" value="ECO:0007669"/>
    <property type="project" value="UniProtKB-SubCell"/>
</dbReference>
<dbReference type="GO" id="GO:0005737">
    <property type="term" value="C:cytoplasm"/>
    <property type="evidence" value="ECO:0007669"/>
    <property type="project" value="UniProtKB-SubCell"/>
</dbReference>
<dbReference type="GO" id="GO:0005869">
    <property type="term" value="C:dynactin complex"/>
    <property type="evidence" value="ECO:0000318"/>
    <property type="project" value="GO_Central"/>
</dbReference>
<dbReference type="GO" id="GO:0000776">
    <property type="term" value="C:kinetochore"/>
    <property type="evidence" value="ECO:0007669"/>
    <property type="project" value="UniProtKB-KW"/>
</dbReference>
<dbReference type="GO" id="GO:0030496">
    <property type="term" value="C:midbody"/>
    <property type="evidence" value="ECO:0007669"/>
    <property type="project" value="UniProtKB-SubCell"/>
</dbReference>
<dbReference type="GO" id="GO:0005819">
    <property type="term" value="C:spindle"/>
    <property type="evidence" value="ECO:0007669"/>
    <property type="project" value="UniProtKB-SubCell"/>
</dbReference>
<dbReference type="GO" id="GO:0061640">
    <property type="term" value="P:cytoskeleton-dependent cytokinesis"/>
    <property type="evidence" value="ECO:0000318"/>
    <property type="project" value="GO_Central"/>
</dbReference>
<dbReference type="InterPro" id="IPR009991">
    <property type="entry name" value="DCTN3"/>
</dbReference>
<dbReference type="PANTHER" id="PTHR28360">
    <property type="entry name" value="DYNACTIN SUBUNIT 3"/>
    <property type="match status" value="1"/>
</dbReference>
<dbReference type="PANTHER" id="PTHR28360:SF1">
    <property type="entry name" value="DYNACTIN SUBUNIT 3"/>
    <property type="match status" value="1"/>
</dbReference>
<dbReference type="Pfam" id="PF07426">
    <property type="entry name" value="Dynactin_p22"/>
    <property type="match status" value="1"/>
</dbReference>
<gene>
    <name type="primary">DCTN3</name>
</gene>
<proteinExistence type="evidence at transcript level"/>
<reference key="1">
    <citation type="submission" date="2006-08" db="EMBL/GenBank/DDBJ databases">
        <authorList>
            <consortium name="NIH - Mammalian Gene Collection (MGC) project"/>
        </authorList>
    </citation>
    <scope>NUCLEOTIDE SEQUENCE [LARGE SCALE MRNA]</scope>
    <source>
        <strain>Hereford</strain>
        <tissue>Hippocampus</tissue>
    </source>
</reference>
<organism>
    <name type="scientific">Bos taurus</name>
    <name type="common">Bovine</name>
    <dbReference type="NCBI Taxonomy" id="9913"/>
    <lineage>
        <taxon>Eukaryota</taxon>
        <taxon>Metazoa</taxon>
        <taxon>Chordata</taxon>
        <taxon>Craniata</taxon>
        <taxon>Vertebrata</taxon>
        <taxon>Euteleostomi</taxon>
        <taxon>Mammalia</taxon>
        <taxon>Eutheria</taxon>
        <taxon>Laurasiatheria</taxon>
        <taxon>Artiodactyla</taxon>
        <taxon>Ruminantia</taxon>
        <taxon>Pecora</taxon>
        <taxon>Bovidae</taxon>
        <taxon>Bovinae</taxon>
        <taxon>Bos</taxon>
    </lineage>
</organism>
<name>DCTN3_BOVIN</name>
<protein>
    <recommendedName>
        <fullName>Dynactin subunit 3</fullName>
    </recommendedName>
</protein>